<gene>
    <name evidence="1" type="primary">tatA</name>
    <name type="ordered locus">A9601_03771</name>
</gene>
<dbReference type="EMBL" id="CP000551">
    <property type="protein sequence ID" value="ABM69665.1"/>
    <property type="molecule type" value="Genomic_DNA"/>
</dbReference>
<dbReference type="RefSeq" id="WP_011817838.1">
    <property type="nucleotide sequence ID" value="NC_008816.1"/>
</dbReference>
<dbReference type="STRING" id="146891.A9601_03771"/>
<dbReference type="KEGG" id="pmb:A9601_03771"/>
<dbReference type="eggNOG" id="COG1826">
    <property type="taxonomic scope" value="Bacteria"/>
</dbReference>
<dbReference type="HOGENOM" id="CLU_086034_1_5_3"/>
<dbReference type="OrthoDB" id="9800908at2"/>
<dbReference type="Proteomes" id="UP000002590">
    <property type="component" value="Chromosome"/>
</dbReference>
<dbReference type="GO" id="GO:0033281">
    <property type="term" value="C:TAT protein transport complex"/>
    <property type="evidence" value="ECO:0007669"/>
    <property type="project" value="UniProtKB-UniRule"/>
</dbReference>
<dbReference type="GO" id="GO:0008320">
    <property type="term" value="F:protein transmembrane transporter activity"/>
    <property type="evidence" value="ECO:0007669"/>
    <property type="project" value="UniProtKB-UniRule"/>
</dbReference>
<dbReference type="GO" id="GO:0043953">
    <property type="term" value="P:protein transport by the Tat complex"/>
    <property type="evidence" value="ECO:0007669"/>
    <property type="project" value="UniProtKB-UniRule"/>
</dbReference>
<dbReference type="Gene3D" id="1.20.5.3310">
    <property type="match status" value="1"/>
</dbReference>
<dbReference type="HAMAP" id="MF_00236">
    <property type="entry name" value="TatA_E"/>
    <property type="match status" value="1"/>
</dbReference>
<dbReference type="InterPro" id="IPR003369">
    <property type="entry name" value="TatA/B/E"/>
</dbReference>
<dbReference type="InterPro" id="IPR006312">
    <property type="entry name" value="TatA/E"/>
</dbReference>
<dbReference type="NCBIfam" id="NF011429">
    <property type="entry name" value="PRK14857.1"/>
    <property type="match status" value="1"/>
</dbReference>
<dbReference type="NCBIfam" id="NF011430">
    <property type="entry name" value="PRK14861.1"/>
    <property type="match status" value="1"/>
</dbReference>
<dbReference type="NCBIfam" id="TIGR01411">
    <property type="entry name" value="tatAE"/>
    <property type="match status" value="1"/>
</dbReference>
<dbReference type="PANTHER" id="PTHR33162">
    <property type="entry name" value="SEC-INDEPENDENT PROTEIN TRANSLOCASE PROTEIN TATA, CHLOROPLASTIC"/>
    <property type="match status" value="1"/>
</dbReference>
<dbReference type="PANTHER" id="PTHR33162:SF1">
    <property type="entry name" value="SEC-INDEPENDENT PROTEIN TRANSLOCASE PROTEIN TATA, CHLOROPLASTIC"/>
    <property type="match status" value="1"/>
</dbReference>
<dbReference type="Pfam" id="PF02416">
    <property type="entry name" value="TatA_B_E"/>
    <property type="match status" value="1"/>
</dbReference>
<dbReference type="PRINTS" id="PR01506">
    <property type="entry name" value="TATBPROTEIN"/>
</dbReference>
<proteinExistence type="inferred from homology"/>
<evidence type="ECO:0000255" key="1">
    <source>
        <dbReference type="HAMAP-Rule" id="MF_00236"/>
    </source>
</evidence>
<evidence type="ECO:0000256" key="2">
    <source>
        <dbReference type="SAM" id="MobiDB-lite"/>
    </source>
</evidence>
<protein>
    <recommendedName>
        <fullName evidence="1">Sec-independent protein translocase protein TatA</fullName>
    </recommendedName>
</protein>
<organism>
    <name type="scientific">Prochlorococcus marinus (strain AS9601)</name>
    <dbReference type="NCBI Taxonomy" id="146891"/>
    <lineage>
        <taxon>Bacteria</taxon>
        <taxon>Bacillati</taxon>
        <taxon>Cyanobacteriota</taxon>
        <taxon>Cyanophyceae</taxon>
        <taxon>Synechococcales</taxon>
        <taxon>Prochlorococcaceae</taxon>
        <taxon>Prochlorococcus</taxon>
    </lineage>
</organism>
<sequence length="88" mass="9840">MNIFGVGLPEVTVILILALLIFGPKKLPELGKQLGKTLKSLKKASNEFQNEIDQVMNEQDKDESPISIESNQTNEINQEKIDSENSKK</sequence>
<reference key="1">
    <citation type="journal article" date="2007" name="PLoS Genet.">
        <title>Patterns and implications of gene gain and loss in the evolution of Prochlorococcus.</title>
        <authorList>
            <person name="Kettler G.C."/>
            <person name="Martiny A.C."/>
            <person name="Huang K."/>
            <person name="Zucker J."/>
            <person name="Coleman M.L."/>
            <person name="Rodrigue S."/>
            <person name="Chen F."/>
            <person name="Lapidus A."/>
            <person name="Ferriera S."/>
            <person name="Johnson J."/>
            <person name="Steglich C."/>
            <person name="Church G.M."/>
            <person name="Richardson P."/>
            <person name="Chisholm S.W."/>
        </authorList>
    </citation>
    <scope>NUCLEOTIDE SEQUENCE [LARGE SCALE GENOMIC DNA]</scope>
    <source>
        <strain>AS9601</strain>
    </source>
</reference>
<keyword id="KW-0997">Cell inner membrane</keyword>
<keyword id="KW-1003">Cell membrane</keyword>
<keyword id="KW-0472">Membrane</keyword>
<keyword id="KW-0653">Protein transport</keyword>
<keyword id="KW-0811">Translocation</keyword>
<keyword id="KW-0812">Transmembrane</keyword>
<keyword id="KW-1133">Transmembrane helix</keyword>
<keyword id="KW-0813">Transport</keyword>
<feature type="chain" id="PRO_0000336635" description="Sec-independent protein translocase protein TatA">
    <location>
        <begin position="1"/>
        <end position="88"/>
    </location>
</feature>
<feature type="transmembrane region" description="Helical" evidence="1">
    <location>
        <begin position="3"/>
        <end position="23"/>
    </location>
</feature>
<feature type="region of interest" description="Disordered" evidence="2">
    <location>
        <begin position="56"/>
        <end position="88"/>
    </location>
</feature>
<feature type="compositionally biased region" description="Polar residues" evidence="2">
    <location>
        <begin position="67"/>
        <end position="76"/>
    </location>
</feature>
<feature type="compositionally biased region" description="Basic and acidic residues" evidence="2">
    <location>
        <begin position="77"/>
        <end position="88"/>
    </location>
</feature>
<accession>A2BPF4</accession>
<name>TATA_PROMS</name>
<comment type="function">
    <text evidence="1">Part of the twin-arginine translocation (Tat) system that transports large folded proteins containing a characteristic twin-arginine motif in their signal peptide across membranes. TatA could form the protein-conducting channel of the Tat system.</text>
</comment>
<comment type="subunit">
    <text evidence="1">Forms a complex with TatC.</text>
</comment>
<comment type="subcellular location">
    <subcellularLocation>
        <location evidence="1">Cell inner membrane</location>
        <topology evidence="1">Single-pass membrane protein</topology>
    </subcellularLocation>
</comment>
<comment type="similarity">
    <text evidence="1">Belongs to the TatA/E family.</text>
</comment>